<comment type="function">
    <text evidence="1">Probable transcriptional activator that promotes chloroplast development. Acts as an activator of nuclear photosynthetic genes involved in chlorophyll biosynthesis, light harvesting, and electron transport (By similarity).</text>
</comment>
<comment type="subcellular location">
    <subcellularLocation>
        <location evidence="5">Nucleus</location>
    </subcellularLocation>
</comment>
<comment type="alternative products">
    <event type="alternative splicing"/>
    <isoform>
        <id>Q5NAN5-1</id>
        <name>1</name>
        <sequence type="displayed"/>
    </isoform>
    <isoform>
        <id>Q5NAN5-2</id>
        <name>2</name>
        <sequence type="described" ref="VSP_041080 VSP_041081"/>
    </isoform>
</comment>
<comment type="tissue specificity">
    <text evidence="4">Expressed in leaves.</text>
</comment>
<comment type="induction">
    <text evidence="4">By light.</text>
</comment>
<gene>
    <name type="primary">GLK2</name>
    <name type="ordered locus">Os01g0239000</name>
    <name type="ordered locus">LOC_Os01g13740</name>
    <name type="ORF">OSJNBa0086P08.28-1</name>
    <name type="ORF">OSJNBa0086P08.28-2</name>
</gene>
<protein>
    <recommendedName>
        <fullName>Probable transcription factor GLK2</fullName>
    </recommendedName>
    <alternativeName>
        <fullName>Golden2-like protein 2</fullName>
        <shortName>OsGLK2</shortName>
    </alternativeName>
</protein>
<sequence>MLEVSTLRSPKADQRAGVGGHHVVGFVPAPPSPADVADEVDAFIVDDSCLLEYIDFSCCDVPFFHADDGDILPDLEVDPTELLAEFASSPDDEPPPTTSAPGPGEPAAAAGAKEDVKEDGAAAAAAAAAADYDGSPPPPRGKKKKDDEERSSSLPEEKDAKNGGGDEVLSAVTTEDSSAGAAKSCSPSAEGHSKRKPSSSSSSAAAGKNSHGKRKVKVDWTPELHRRFVQAVEQLGIDKAVPSRILELMGIECLTRHNIASHLQKYRSHRKHLMAREAEAASWTQKRQMYTAAAAAAAVAAGGGPRKDAAAATAAVAPWVMPTIGFPPPHAAAMVPPPPHPPPFCRPPLHVWGHPTAGVEPTTAAAPPPPSPHAQPPLLPVWPRHLAPPPPPLPAAWAHGHQPAPVDPAAYWQQQYNAARKWGPQAVTPGTPCMPPPLPPAAMLQRFPVPPVPGMVPHPMYRPIPPPSPPQGNKLAALQLQLDAHPSKESIDAAIGDVLVKPWLPLPLGLKPPSLDSVMSELHKQGIPKVPPAASGAAG</sequence>
<feature type="chain" id="PRO_0000408388" description="Probable transcription factor GLK2">
    <location>
        <begin position="1"/>
        <end position="539"/>
    </location>
</feature>
<feature type="domain" description="HTH myb-type" evidence="2">
    <location>
        <begin position="212"/>
        <end position="271"/>
    </location>
</feature>
<feature type="DNA-binding region" description="H-T-H motif" evidence="2">
    <location>
        <begin position="242"/>
        <end position="267"/>
    </location>
</feature>
<feature type="region of interest" description="Disordered" evidence="3">
    <location>
        <begin position="86"/>
        <end position="218"/>
    </location>
</feature>
<feature type="compositionally biased region" description="Low complexity" evidence="3">
    <location>
        <begin position="99"/>
        <end position="111"/>
    </location>
</feature>
<feature type="compositionally biased region" description="Low complexity" evidence="3">
    <location>
        <begin position="121"/>
        <end position="130"/>
    </location>
</feature>
<feature type="compositionally biased region" description="Basic and acidic residues" evidence="3">
    <location>
        <begin position="144"/>
        <end position="161"/>
    </location>
</feature>
<feature type="splice variant" id="VSP_041080" description="In isoform 2." evidence="5">
    <original>DWTPELHR</original>
    <variation>YPYYQPHN</variation>
    <location>
        <begin position="219"/>
        <end position="226"/>
    </location>
</feature>
<feature type="splice variant" id="VSP_041081" description="In isoform 2." evidence="5">
    <location>
        <begin position="227"/>
        <end position="539"/>
    </location>
</feature>
<dbReference type="EMBL" id="AP002855">
    <property type="protein sequence ID" value="BAD81484.1"/>
    <property type="molecule type" value="Genomic_DNA"/>
</dbReference>
<dbReference type="EMBL" id="AP002855">
    <property type="protein sequence ID" value="BAD81485.1"/>
    <property type="molecule type" value="Genomic_DNA"/>
</dbReference>
<dbReference type="EMBL" id="AP008207">
    <property type="protein sequence ID" value="BAF04456.1"/>
    <property type="molecule type" value="Genomic_DNA"/>
</dbReference>
<dbReference type="EMBL" id="AP014957">
    <property type="protein sequence ID" value="BAS71255.1"/>
    <property type="molecule type" value="Genomic_DNA"/>
</dbReference>
<dbReference type="EMBL" id="AP014957">
    <property type="protein sequence ID" value="BAS71256.1"/>
    <property type="molecule type" value="Genomic_DNA"/>
</dbReference>
<dbReference type="EMBL" id="AK121019">
    <property type="protein sequence ID" value="BAH00278.1"/>
    <property type="molecule type" value="mRNA"/>
</dbReference>
<dbReference type="RefSeq" id="XP_015615905.1">
    <property type="nucleotide sequence ID" value="XM_015760419.1"/>
</dbReference>
<dbReference type="SMR" id="Q5NAN5"/>
<dbReference type="FunCoup" id="Q5NAN5">
    <property type="interactions" value="614"/>
</dbReference>
<dbReference type="STRING" id="39947.Q5NAN5"/>
<dbReference type="PaxDb" id="39947-Q5NAN5"/>
<dbReference type="EnsemblPlants" id="Os01t0239000-02">
    <molecule id="Q5NAN5-1"/>
    <property type="protein sequence ID" value="Os01t0239000-02"/>
    <property type="gene ID" value="Os01g0239000"/>
</dbReference>
<dbReference type="Gramene" id="Os01t0239000-02">
    <molecule id="Q5NAN5-1"/>
    <property type="protein sequence ID" value="Os01t0239000-02"/>
    <property type="gene ID" value="Os01g0239000"/>
</dbReference>
<dbReference type="KEGG" id="dosa:Os01g0239000"/>
<dbReference type="eggNOG" id="ENOG502S88Y">
    <property type="taxonomic scope" value="Eukaryota"/>
</dbReference>
<dbReference type="HOGENOM" id="CLU_050767_0_0_1"/>
<dbReference type="InParanoid" id="Q5NAN5"/>
<dbReference type="OMA" id="KRQMYTA"/>
<dbReference type="OrthoDB" id="60033at2759"/>
<dbReference type="Proteomes" id="UP000000763">
    <property type="component" value="Chromosome 1"/>
</dbReference>
<dbReference type="Proteomes" id="UP000059680">
    <property type="component" value="Chromosome 1"/>
</dbReference>
<dbReference type="GO" id="GO:0005634">
    <property type="term" value="C:nucleus"/>
    <property type="evidence" value="ECO:0000318"/>
    <property type="project" value="GO_Central"/>
</dbReference>
<dbReference type="GO" id="GO:0003700">
    <property type="term" value="F:DNA-binding transcription factor activity"/>
    <property type="evidence" value="ECO:0000318"/>
    <property type="project" value="GO_Central"/>
</dbReference>
<dbReference type="GO" id="GO:0000976">
    <property type="term" value="F:transcription cis-regulatory region binding"/>
    <property type="evidence" value="ECO:0000318"/>
    <property type="project" value="GO_Central"/>
</dbReference>
<dbReference type="GO" id="GO:0045893">
    <property type="term" value="P:positive regulation of DNA-templated transcription"/>
    <property type="evidence" value="ECO:0000318"/>
    <property type="project" value="GO_Central"/>
</dbReference>
<dbReference type="FunFam" id="1.10.10.60:FF:000007">
    <property type="entry name" value="Two-component response regulator"/>
    <property type="match status" value="1"/>
</dbReference>
<dbReference type="Gene3D" id="1.10.10.60">
    <property type="entry name" value="Homeodomain-like"/>
    <property type="match status" value="1"/>
</dbReference>
<dbReference type="InterPro" id="IPR044825">
    <property type="entry name" value="GLK1/2-like"/>
</dbReference>
<dbReference type="InterPro" id="IPR009057">
    <property type="entry name" value="Homeodomain-like_sf"/>
</dbReference>
<dbReference type="InterPro" id="IPR017930">
    <property type="entry name" value="Myb_dom"/>
</dbReference>
<dbReference type="InterPro" id="IPR006447">
    <property type="entry name" value="Myb_dom_plants"/>
</dbReference>
<dbReference type="InterPro" id="IPR001005">
    <property type="entry name" value="SANT/Myb"/>
</dbReference>
<dbReference type="NCBIfam" id="TIGR01557">
    <property type="entry name" value="myb_SHAQKYF"/>
    <property type="match status" value="1"/>
</dbReference>
<dbReference type="PANTHER" id="PTHR31312">
    <property type="entry name" value="TRANSCRIPTION ACTIVATOR GLK1"/>
    <property type="match status" value="1"/>
</dbReference>
<dbReference type="PANTHER" id="PTHR31312:SF1">
    <property type="entry name" value="TRANSCRIPTION ACTIVATOR GLK1"/>
    <property type="match status" value="1"/>
</dbReference>
<dbReference type="Pfam" id="PF00249">
    <property type="entry name" value="Myb_DNA-binding"/>
    <property type="match status" value="1"/>
</dbReference>
<dbReference type="SUPFAM" id="SSF46689">
    <property type="entry name" value="Homeodomain-like"/>
    <property type="match status" value="1"/>
</dbReference>
<dbReference type="PROSITE" id="PS51294">
    <property type="entry name" value="HTH_MYB"/>
    <property type="match status" value="1"/>
</dbReference>
<reference key="1">
    <citation type="journal article" date="2002" name="Nature">
        <title>The genome sequence and structure of rice chromosome 1.</title>
        <authorList>
            <person name="Sasaki T."/>
            <person name="Matsumoto T."/>
            <person name="Yamamoto K."/>
            <person name="Sakata K."/>
            <person name="Baba T."/>
            <person name="Katayose Y."/>
            <person name="Wu J."/>
            <person name="Niimura Y."/>
            <person name="Cheng Z."/>
            <person name="Nagamura Y."/>
            <person name="Antonio B.A."/>
            <person name="Kanamori H."/>
            <person name="Hosokawa S."/>
            <person name="Masukawa M."/>
            <person name="Arikawa K."/>
            <person name="Chiden Y."/>
            <person name="Hayashi M."/>
            <person name="Okamoto M."/>
            <person name="Ando T."/>
            <person name="Aoki H."/>
            <person name="Arita K."/>
            <person name="Hamada M."/>
            <person name="Harada C."/>
            <person name="Hijishita S."/>
            <person name="Honda M."/>
            <person name="Ichikawa Y."/>
            <person name="Idonuma A."/>
            <person name="Iijima M."/>
            <person name="Ikeda M."/>
            <person name="Ikeno M."/>
            <person name="Ito S."/>
            <person name="Ito T."/>
            <person name="Ito Y."/>
            <person name="Ito Y."/>
            <person name="Iwabuchi A."/>
            <person name="Kamiya K."/>
            <person name="Karasawa W."/>
            <person name="Katagiri S."/>
            <person name="Kikuta A."/>
            <person name="Kobayashi N."/>
            <person name="Kono I."/>
            <person name="Machita K."/>
            <person name="Maehara T."/>
            <person name="Mizuno H."/>
            <person name="Mizubayashi T."/>
            <person name="Mukai Y."/>
            <person name="Nagasaki H."/>
            <person name="Nakashima M."/>
            <person name="Nakama Y."/>
            <person name="Nakamichi Y."/>
            <person name="Nakamura M."/>
            <person name="Namiki N."/>
            <person name="Negishi M."/>
            <person name="Ohta I."/>
            <person name="Ono N."/>
            <person name="Saji S."/>
            <person name="Sakai K."/>
            <person name="Shibata M."/>
            <person name="Shimokawa T."/>
            <person name="Shomura A."/>
            <person name="Song J."/>
            <person name="Takazaki Y."/>
            <person name="Terasawa K."/>
            <person name="Tsuji K."/>
            <person name="Waki K."/>
            <person name="Yamagata H."/>
            <person name="Yamane H."/>
            <person name="Yoshiki S."/>
            <person name="Yoshihara R."/>
            <person name="Yukawa K."/>
            <person name="Zhong H."/>
            <person name="Iwama H."/>
            <person name="Endo T."/>
            <person name="Ito H."/>
            <person name="Hahn J.H."/>
            <person name="Kim H.-I."/>
            <person name="Eun M.-Y."/>
            <person name="Yano M."/>
            <person name="Jiang J."/>
            <person name="Gojobori T."/>
        </authorList>
    </citation>
    <scope>NUCLEOTIDE SEQUENCE [LARGE SCALE GENOMIC DNA]</scope>
    <source>
        <strain>cv. Nipponbare</strain>
    </source>
</reference>
<reference key="2">
    <citation type="journal article" date="2005" name="Nature">
        <title>The map-based sequence of the rice genome.</title>
        <authorList>
            <consortium name="International rice genome sequencing project (IRGSP)"/>
        </authorList>
    </citation>
    <scope>NUCLEOTIDE SEQUENCE [LARGE SCALE GENOMIC DNA]</scope>
    <source>
        <strain>cv. Nipponbare</strain>
    </source>
</reference>
<reference key="3">
    <citation type="journal article" date="2008" name="Nucleic Acids Res.">
        <title>The rice annotation project database (RAP-DB): 2008 update.</title>
        <authorList>
            <consortium name="The rice annotation project (RAP)"/>
        </authorList>
    </citation>
    <scope>GENOME REANNOTATION</scope>
    <source>
        <strain>cv. Nipponbare</strain>
    </source>
</reference>
<reference key="4">
    <citation type="journal article" date="2013" name="Rice">
        <title>Improvement of the Oryza sativa Nipponbare reference genome using next generation sequence and optical map data.</title>
        <authorList>
            <person name="Kawahara Y."/>
            <person name="de la Bastide M."/>
            <person name="Hamilton J.P."/>
            <person name="Kanamori H."/>
            <person name="McCombie W.R."/>
            <person name="Ouyang S."/>
            <person name="Schwartz D.C."/>
            <person name="Tanaka T."/>
            <person name="Wu J."/>
            <person name="Zhou S."/>
            <person name="Childs K.L."/>
            <person name="Davidson R.M."/>
            <person name="Lin H."/>
            <person name="Quesada-Ocampo L."/>
            <person name="Vaillancourt B."/>
            <person name="Sakai H."/>
            <person name="Lee S.S."/>
            <person name="Kim J."/>
            <person name="Numa H."/>
            <person name="Itoh T."/>
            <person name="Buell C.R."/>
            <person name="Matsumoto T."/>
        </authorList>
    </citation>
    <scope>GENOME REANNOTATION</scope>
    <source>
        <strain>cv. Nipponbare</strain>
    </source>
</reference>
<reference key="5">
    <citation type="journal article" date="2003" name="Science">
        <title>Collection, mapping, and annotation of over 28,000 cDNA clones from japonica rice.</title>
        <authorList>
            <consortium name="The rice full-length cDNA consortium"/>
        </authorList>
    </citation>
    <scope>NUCLEOTIDE SEQUENCE [LARGE SCALE MRNA] (ISOFORM 1)</scope>
    <source>
        <strain>cv. Nipponbare</strain>
    </source>
</reference>
<reference key="6">
    <citation type="journal article" date="2001" name="Plant Cell">
        <title>The maize golden2 gene defines a novel class of transcriptional regulators in plants.</title>
        <authorList>
            <person name="Rossini L."/>
            <person name="Cribb L."/>
            <person name="Martin D.J."/>
            <person name="Langdale J.A."/>
        </authorList>
    </citation>
    <scope>TISSUE SPECIFICITY</scope>
    <scope>INDUCTION</scope>
</reference>
<accession>Q5NAN5</accession>
<accession>A0A0P0V0C1</accession>
<accession>Q5NAN4</accession>
<organism>
    <name type="scientific">Oryza sativa subsp. japonica</name>
    <name type="common">Rice</name>
    <dbReference type="NCBI Taxonomy" id="39947"/>
    <lineage>
        <taxon>Eukaryota</taxon>
        <taxon>Viridiplantae</taxon>
        <taxon>Streptophyta</taxon>
        <taxon>Embryophyta</taxon>
        <taxon>Tracheophyta</taxon>
        <taxon>Spermatophyta</taxon>
        <taxon>Magnoliopsida</taxon>
        <taxon>Liliopsida</taxon>
        <taxon>Poales</taxon>
        <taxon>Poaceae</taxon>
        <taxon>BOP clade</taxon>
        <taxon>Oryzoideae</taxon>
        <taxon>Oryzeae</taxon>
        <taxon>Oryzinae</taxon>
        <taxon>Oryza</taxon>
        <taxon>Oryza sativa</taxon>
    </lineage>
</organism>
<evidence type="ECO:0000250" key="1"/>
<evidence type="ECO:0000255" key="2">
    <source>
        <dbReference type="PROSITE-ProRule" id="PRU00625"/>
    </source>
</evidence>
<evidence type="ECO:0000256" key="3">
    <source>
        <dbReference type="SAM" id="MobiDB-lite"/>
    </source>
</evidence>
<evidence type="ECO:0000269" key="4">
    <source>
    </source>
</evidence>
<evidence type="ECO:0000305" key="5"/>
<name>GLK2_ORYSJ</name>
<keyword id="KW-0025">Alternative splicing</keyword>
<keyword id="KW-0238">DNA-binding</keyword>
<keyword id="KW-0539">Nucleus</keyword>
<keyword id="KW-1185">Reference proteome</keyword>
<keyword id="KW-0804">Transcription</keyword>
<keyword id="KW-0805">Transcription regulation</keyword>
<proteinExistence type="evidence at transcript level"/>